<gene>
    <name type="ordered locus">RSc0505</name>
    <name type="ORF">RS05017</name>
</gene>
<dbReference type="EMBL" id="AL646052">
    <property type="protein sequence ID" value="CAD14033.1"/>
    <property type="molecule type" value="Genomic_DNA"/>
</dbReference>
<dbReference type="RefSeq" id="WP_011000464.1">
    <property type="nucleotide sequence ID" value="NC_003295.1"/>
</dbReference>
<dbReference type="SMR" id="Q8Y231"/>
<dbReference type="STRING" id="267608.RSc0505"/>
<dbReference type="EnsemblBacteria" id="CAD14033">
    <property type="protein sequence ID" value="CAD14033"/>
    <property type="gene ID" value="RSc0505"/>
</dbReference>
<dbReference type="KEGG" id="rso:RSc0505"/>
<dbReference type="eggNOG" id="COG2901">
    <property type="taxonomic scope" value="Bacteria"/>
</dbReference>
<dbReference type="HOGENOM" id="CLU_158040_2_1_4"/>
<dbReference type="Proteomes" id="UP000001436">
    <property type="component" value="Chromosome"/>
</dbReference>
<dbReference type="GO" id="GO:0043565">
    <property type="term" value="F:sequence-specific DNA binding"/>
    <property type="evidence" value="ECO:0007669"/>
    <property type="project" value="InterPro"/>
</dbReference>
<dbReference type="GO" id="GO:0006355">
    <property type="term" value="P:regulation of DNA-templated transcription"/>
    <property type="evidence" value="ECO:0007669"/>
    <property type="project" value="InterPro"/>
</dbReference>
<dbReference type="Gene3D" id="1.10.10.60">
    <property type="entry name" value="Homeodomain-like"/>
    <property type="match status" value="1"/>
</dbReference>
<dbReference type="InterPro" id="IPR005412">
    <property type="entry name" value="Fis_DNA-bd"/>
</dbReference>
<dbReference type="InterPro" id="IPR009057">
    <property type="entry name" value="Homeodomain-like_sf"/>
</dbReference>
<dbReference type="InterPro" id="IPR002197">
    <property type="entry name" value="HTH_Fis"/>
</dbReference>
<dbReference type="InterPro" id="IPR050207">
    <property type="entry name" value="Trans_regulatory_Fis"/>
</dbReference>
<dbReference type="NCBIfam" id="NF002517">
    <property type="entry name" value="PRK01905.1"/>
    <property type="match status" value="1"/>
</dbReference>
<dbReference type="PANTHER" id="PTHR47918">
    <property type="entry name" value="DNA-BINDING PROTEIN FIS"/>
    <property type="match status" value="1"/>
</dbReference>
<dbReference type="PANTHER" id="PTHR47918:SF1">
    <property type="entry name" value="DNA-BINDING PROTEIN FIS"/>
    <property type="match status" value="1"/>
</dbReference>
<dbReference type="Pfam" id="PF02954">
    <property type="entry name" value="HTH_8"/>
    <property type="match status" value="1"/>
</dbReference>
<dbReference type="PIRSF" id="PIRSF002097">
    <property type="entry name" value="DNA-binding_Fis"/>
    <property type="match status" value="1"/>
</dbReference>
<dbReference type="PRINTS" id="PR01591">
    <property type="entry name" value="DNABINDNGFIS"/>
</dbReference>
<dbReference type="PRINTS" id="PR01590">
    <property type="entry name" value="HTHFIS"/>
</dbReference>
<dbReference type="SUPFAM" id="SSF46689">
    <property type="entry name" value="Homeodomain-like"/>
    <property type="match status" value="1"/>
</dbReference>
<evidence type="ECO:0000250" key="1"/>
<evidence type="ECO:0000305" key="2"/>
<proteinExistence type="inferred from homology"/>
<name>FISL_RALN1</name>
<feature type="chain" id="PRO_0000203908" description="Putative Fis-like DNA-binding protein">
    <location>
        <begin position="1"/>
        <end position="77"/>
    </location>
</feature>
<feature type="DNA-binding region" description="H-T-H motif" evidence="1">
    <location>
        <begin position="53"/>
        <end position="72"/>
    </location>
</feature>
<sequence>MSRNPIERCIRDSLDTYYRDLDGENPSNVYDMVLQAIERPLLETVMEWASNNQSLAADYLGINRNTLRKKLQQHGLL</sequence>
<organism>
    <name type="scientific">Ralstonia nicotianae (strain ATCC BAA-1114 / GMI1000)</name>
    <name type="common">Ralstonia solanacearum</name>
    <dbReference type="NCBI Taxonomy" id="267608"/>
    <lineage>
        <taxon>Bacteria</taxon>
        <taxon>Pseudomonadati</taxon>
        <taxon>Pseudomonadota</taxon>
        <taxon>Betaproteobacteria</taxon>
        <taxon>Burkholderiales</taxon>
        <taxon>Burkholderiaceae</taxon>
        <taxon>Ralstonia</taxon>
        <taxon>Ralstonia solanacearum species complex</taxon>
    </lineage>
</organism>
<protein>
    <recommendedName>
        <fullName>Putative Fis-like DNA-binding protein</fullName>
    </recommendedName>
</protein>
<accession>Q8Y231</accession>
<comment type="similarity">
    <text evidence="2">Belongs to the transcriptional regulatory Fis family.</text>
</comment>
<keyword id="KW-0238">DNA-binding</keyword>
<keyword id="KW-1185">Reference proteome</keyword>
<reference key="1">
    <citation type="journal article" date="2002" name="Nature">
        <title>Genome sequence of the plant pathogen Ralstonia solanacearum.</title>
        <authorList>
            <person name="Salanoubat M."/>
            <person name="Genin S."/>
            <person name="Artiguenave F."/>
            <person name="Gouzy J."/>
            <person name="Mangenot S."/>
            <person name="Arlat M."/>
            <person name="Billault A."/>
            <person name="Brottier P."/>
            <person name="Camus J.-C."/>
            <person name="Cattolico L."/>
            <person name="Chandler M."/>
            <person name="Choisne N."/>
            <person name="Claudel-Renard C."/>
            <person name="Cunnac S."/>
            <person name="Demange N."/>
            <person name="Gaspin C."/>
            <person name="Lavie M."/>
            <person name="Moisan A."/>
            <person name="Robert C."/>
            <person name="Saurin W."/>
            <person name="Schiex T."/>
            <person name="Siguier P."/>
            <person name="Thebault P."/>
            <person name="Whalen M."/>
            <person name="Wincker P."/>
            <person name="Levy M."/>
            <person name="Weissenbach J."/>
            <person name="Boucher C.A."/>
        </authorList>
    </citation>
    <scope>NUCLEOTIDE SEQUENCE [LARGE SCALE GENOMIC DNA]</scope>
    <source>
        <strain>ATCC BAA-1114 / GMI1000</strain>
    </source>
</reference>